<comment type="function">
    <text evidence="1">Located on the platform of the 30S subunit.</text>
</comment>
<comment type="subunit">
    <text evidence="1">Part of the 30S ribosomal subunit.</text>
</comment>
<comment type="similarity">
    <text evidence="1">Belongs to the universal ribosomal protein uS11 family.</text>
</comment>
<feature type="chain" id="PRO_0000123284" description="Small ribosomal subunit protein uS11">
    <location>
        <begin position="1"/>
        <end position="132"/>
    </location>
</feature>
<protein>
    <recommendedName>
        <fullName evidence="1">Small ribosomal subunit protein uS11</fullName>
    </recommendedName>
    <alternativeName>
        <fullName evidence="2">30S ribosomal protein S11</fullName>
    </alternativeName>
</protein>
<keyword id="KW-1185">Reference proteome</keyword>
<keyword id="KW-0687">Ribonucleoprotein</keyword>
<keyword id="KW-0689">Ribosomal protein</keyword>
<keyword id="KW-0694">RNA-binding</keyword>
<keyword id="KW-0699">rRNA-binding</keyword>
<gene>
    <name evidence="1" type="primary">rps11</name>
    <name type="ordered locus">STK_20680</name>
</gene>
<sequence>MSSRREIRWGIARVYASQNNTLITITDITGAEIISRASGGMVVKADREKPSPYAAMLAANKAATEAFDKGISAIHIKVRAQGGYGSKTPGPGAQPAIRALARAGFIIGRIEDVTPIPHDSIRRPGGRRGRRV</sequence>
<accession>Q96YV9</accession>
<accession>F9VP78</accession>
<name>RS11_SULTO</name>
<proteinExistence type="inferred from homology"/>
<reference key="1">
    <citation type="journal article" date="2001" name="DNA Res.">
        <title>Complete genome sequence of an aerobic thermoacidophilic Crenarchaeon, Sulfolobus tokodaii strain7.</title>
        <authorList>
            <person name="Kawarabayasi Y."/>
            <person name="Hino Y."/>
            <person name="Horikawa H."/>
            <person name="Jin-no K."/>
            <person name="Takahashi M."/>
            <person name="Sekine M."/>
            <person name="Baba S."/>
            <person name="Ankai A."/>
            <person name="Kosugi H."/>
            <person name="Hosoyama A."/>
            <person name="Fukui S."/>
            <person name="Nagai Y."/>
            <person name="Nishijima K."/>
            <person name="Otsuka R."/>
            <person name="Nakazawa H."/>
            <person name="Takamiya M."/>
            <person name="Kato Y."/>
            <person name="Yoshizawa T."/>
            <person name="Tanaka T."/>
            <person name="Kudoh Y."/>
            <person name="Yamazaki J."/>
            <person name="Kushida N."/>
            <person name="Oguchi A."/>
            <person name="Aoki K."/>
            <person name="Masuda S."/>
            <person name="Yanagii M."/>
            <person name="Nishimura M."/>
            <person name="Yamagishi A."/>
            <person name="Oshima T."/>
            <person name="Kikuchi H."/>
        </authorList>
    </citation>
    <scope>NUCLEOTIDE SEQUENCE [LARGE SCALE GENOMIC DNA]</scope>
    <source>
        <strain>DSM 16993 / JCM 10545 / NBRC 100140 / 7</strain>
    </source>
</reference>
<evidence type="ECO:0000255" key="1">
    <source>
        <dbReference type="HAMAP-Rule" id="MF_01310"/>
    </source>
</evidence>
<evidence type="ECO:0000305" key="2"/>
<dbReference type="EMBL" id="BA000023">
    <property type="protein sequence ID" value="BAK54725.1"/>
    <property type="molecule type" value="Genomic_DNA"/>
</dbReference>
<dbReference type="RefSeq" id="WP_052846715.1">
    <property type="nucleotide sequence ID" value="NC_003106.2"/>
</dbReference>
<dbReference type="SMR" id="Q96YV9"/>
<dbReference type="STRING" id="273063.STK_20680"/>
<dbReference type="KEGG" id="sto:STK_20680"/>
<dbReference type="PATRIC" id="fig|273063.9.peg.2356"/>
<dbReference type="eggNOG" id="arCOG04240">
    <property type="taxonomic scope" value="Archaea"/>
</dbReference>
<dbReference type="OrthoDB" id="12054at2157"/>
<dbReference type="Proteomes" id="UP000001015">
    <property type="component" value="Chromosome"/>
</dbReference>
<dbReference type="GO" id="GO:1990904">
    <property type="term" value="C:ribonucleoprotein complex"/>
    <property type="evidence" value="ECO:0007669"/>
    <property type="project" value="UniProtKB-KW"/>
</dbReference>
<dbReference type="GO" id="GO:0005840">
    <property type="term" value="C:ribosome"/>
    <property type="evidence" value="ECO:0007669"/>
    <property type="project" value="UniProtKB-KW"/>
</dbReference>
<dbReference type="GO" id="GO:0019843">
    <property type="term" value="F:rRNA binding"/>
    <property type="evidence" value="ECO:0007669"/>
    <property type="project" value="UniProtKB-UniRule"/>
</dbReference>
<dbReference type="GO" id="GO:0003735">
    <property type="term" value="F:structural constituent of ribosome"/>
    <property type="evidence" value="ECO:0007669"/>
    <property type="project" value="InterPro"/>
</dbReference>
<dbReference type="GO" id="GO:0006412">
    <property type="term" value="P:translation"/>
    <property type="evidence" value="ECO:0007669"/>
    <property type="project" value="UniProtKB-UniRule"/>
</dbReference>
<dbReference type="FunFam" id="3.30.420.80:FF:000007">
    <property type="entry name" value="30S ribosomal protein S11"/>
    <property type="match status" value="1"/>
</dbReference>
<dbReference type="Gene3D" id="3.30.420.80">
    <property type="entry name" value="Ribosomal protein S11"/>
    <property type="match status" value="1"/>
</dbReference>
<dbReference type="HAMAP" id="MF_01310">
    <property type="entry name" value="Ribosomal_uS11"/>
    <property type="match status" value="1"/>
</dbReference>
<dbReference type="InterPro" id="IPR001971">
    <property type="entry name" value="Ribosomal_uS11"/>
</dbReference>
<dbReference type="InterPro" id="IPR019961">
    <property type="entry name" value="Ribosomal_uS11_archaeal"/>
</dbReference>
<dbReference type="InterPro" id="IPR018102">
    <property type="entry name" value="Ribosomal_uS11_CS"/>
</dbReference>
<dbReference type="InterPro" id="IPR036967">
    <property type="entry name" value="Ribosomal_uS11_sf"/>
</dbReference>
<dbReference type="NCBIfam" id="TIGR03628">
    <property type="entry name" value="arch_S11P"/>
    <property type="match status" value="1"/>
</dbReference>
<dbReference type="NCBIfam" id="NF007176">
    <property type="entry name" value="PRK09607.1"/>
    <property type="match status" value="1"/>
</dbReference>
<dbReference type="PANTHER" id="PTHR11759">
    <property type="entry name" value="40S RIBOSOMAL PROTEIN S14/30S RIBOSOMAL PROTEIN S11"/>
    <property type="match status" value="1"/>
</dbReference>
<dbReference type="Pfam" id="PF00411">
    <property type="entry name" value="Ribosomal_S11"/>
    <property type="match status" value="1"/>
</dbReference>
<dbReference type="PIRSF" id="PIRSF002131">
    <property type="entry name" value="Ribosomal_S11"/>
    <property type="match status" value="1"/>
</dbReference>
<dbReference type="SUPFAM" id="SSF53137">
    <property type="entry name" value="Translational machinery components"/>
    <property type="match status" value="1"/>
</dbReference>
<dbReference type="PROSITE" id="PS00054">
    <property type="entry name" value="RIBOSOMAL_S11"/>
    <property type="match status" value="1"/>
</dbReference>
<organism>
    <name type="scientific">Sulfurisphaera tokodaii (strain DSM 16993 / JCM 10545 / NBRC 100140 / 7)</name>
    <name type="common">Sulfolobus tokodaii</name>
    <dbReference type="NCBI Taxonomy" id="273063"/>
    <lineage>
        <taxon>Archaea</taxon>
        <taxon>Thermoproteota</taxon>
        <taxon>Thermoprotei</taxon>
        <taxon>Sulfolobales</taxon>
        <taxon>Sulfolobaceae</taxon>
        <taxon>Sulfurisphaera</taxon>
    </lineage>
</organism>